<proteinExistence type="inferred from homology"/>
<protein>
    <recommendedName>
        <fullName evidence="1">2-succinyl-5-enolpyruvyl-6-hydroxy-3-cyclohexene-1-carboxylate synthase</fullName>
        <shortName evidence="1">SEPHCHC synthase</shortName>
        <ecNumber evidence="1">2.2.1.9</ecNumber>
    </recommendedName>
    <alternativeName>
        <fullName evidence="1">Menaquinone biosynthesis protein MenD</fullName>
    </alternativeName>
</protein>
<feature type="chain" id="PRO_0000341698" description="2-succinyl-5-enolpyruvyl-6-hydroxy-3-cyclohexene-1-carboxylate synthase">
    <location>
        <begin position="1"/>
        <end position="572"/>
    </location>
</feature>
<sequence length="572" mass="62804">MFASQHATFNHVWSSLLLEELHRLGVRDIALASGSRSAPLTMAAAAHAGFRRHLHFDERGLGFMALGLAKGSGRPVAVIMTSGTAVANLWPAVAEAQLTGVPLIILSADRPPELIDNGANQAIDQQGIFGRYPVYQQNLPSPTPTIPAAFVLSSVDQVLAQQALTPGPVHFNCMYPEPLYPGDEYLDFSGYLAPLGDWLHSSEPWSPWQQNEQICPRQPDWAALQGKRGIIVAGRIQDPAQAQVVAELAERLGWPLLADLQSQIRFDARNLIHMDLALQNSCFVAELARAEVLLQFGARLISKRLGQFIKQHPWQDYWLVDPQPARLDPDYRLRRRLVCEPAAFAATHKVSTRHLPWHRLAERQQSATRQIRSACDRFSELGVCHRLGNLIQGQLFVGNSMPARLMDMLGEAGKGPSRVMTNRGASGIDGLIATAYGFAQSSEQPTTLLIGDLSALHDLNSLALLGKSSRPLVVILLNNDGGSIFRMLPVPTGDRLLETYYCLPHGLHFEHAAAMFGLHYRAPTTLAEFEQAYTAALKKPELEKKVTLIEIKVPSSEVAEDLKALGAAIRGL</sequence>
<comment type="function">
    <text evidence="1">Catalyzes the thiamine diphosphate-dependent decarboxylation of 2-oxoglutarate and the subsequent addition of the resulting succinic semialdehyde-thiamine pyrophosphate anion to isochorismate to yield 2-succinyl-5-enolpyruvyl-6-hydroxy-3-cyclohexene-1-carboxylate (SEPHCHC).</text>
</comment>
<comment type="catalytic activity">
    <reaction evidence="1">
        <text>isochorismate + 2-oxoglutarate + H(+) = 5-enolpyruvoyl-6-hydroxy-2-succinyl-cyclohex-3-ene-1-carboxylate + CO2</text>
        <dbReference type="Rhea" id="RHEA:25593"/>
        <dbReference type="ChEBI" id="CHEBI:15378"/>
        <dbReference type="ChEBI" id="CHEBI:16526"/>
        <dbReference type="ChEBI" id="CHEBI:16810"/>
        <dbReference type="ChEBI" id="CHEBI:29780"/>
        <dbReference type="ChEBI" id="CHEBI:58818"/>
        <dbReference type="EC" id="2.2.1.9"/>
    </reaction>
</comment>
<comment type="cofactor">
    <cofactor evidence="1">
        <name>Mg(2+)</name>
        <dbReference type="ChEBI" id="CHEBI:18420"/>
    </cofactor>
    <cofactor evidence="1">
        <name>Mn(2+)</name>
        <dbReference type="ChEBI" id="CHEBI:29035"/>
    </cofactor>
</comment>
<comment type="cofactor">
    <cofactor evidence="1">
        <name>thiamine diphosphate</name>
        <dbReference type="ChEBI" id="CHEBI:58937"/>
    </cofactor>
    <text evidence="1">Binds 1 thiamine pyrophosphate per subunit.</text>
</comment>
<comment type="pathway">
    <text evidence="1">Quinol/quinone metabolism; 1,4-dihydroxy-2-naphthoate biosynthesis; 1,4-dihydroxy-2-naphthoate from chorismate: step 2/7.</text>
</comment>
<comment type="pathway">
    <text evidence="1">Quinol/quinone metabolism; menaquinone biosynthesis.</text>
</comment>
<comment type="subunit">
    <text evidence="1">Homodimer.</text>
</comment>
<comment type="similarity">
    <text evidence="1">Belongs to the TPP enzyme family. MenD subfamily.</text>
</comment>
<reference key="1">
    <citation type="journal article" date="2008" name="BMC Genomics">
        <title>The genome of Aeromonas salmonicida subsp. salmonicida A449: insights into the evolution of a fish pathogen.</title>
        <authorList>
            <person name="Reith M.E."/>
            <person name="Singh R.K."/>
            <person name="Curtis B."/>
            <person name="Boyd J.M."/>
            <person name="Bouevitch A."/>
            <person name="Kimball J."/>
            <person name="Munholland J."/>
            <person name="Murphy C."/>
            <person name="Sarty D."/>
            <person name="Williams J."/>
            <person name="Nash J.H."/>
            <person name="Johnson S.C."/>
            <person name="Brown L.L."/>
        </authorList>
    </citation>
    <scope>NUCLEOTIDE SEQUENCE [LARGE SCALE GENOMIC DNA]</scope>
    <source>
        <strain>A449</strain>
    </source>
</reference>
<accession>A4SS26</accession>
<gene>
    <name evidence="1" type="primary">menD</name>
    <name type="ordered locus">ASA_3737</name>
</gene>
<name>MEND_AERS4</name>
<organism>
    <name type="scientific">Aeromonas salmonicida (strain A449)</name>
    <dbReference type="NCBI Taxonomy" id="382245"/>
    <lineage>
        <taxon>Bacteria</taxon>
        <taxon>Pseudomonadati</taxon>
        <taxon>Pseudomonadota</taxon>
        <taxon>Gammaproteobacteria</taxon>
        <taxon>Aeromonadales</taxon>
        <taxon>Aeromonadaceae</taxon>
        <taxon>Aeromonas</taxon>
    </lineage>
</organism>
<keyword id="KW-0460">Magnesium</keyword>
<keyword id="KW-0464">Manganese</keyword>
<keyword id="KW-0474">Menaquinone biosynthesis</keyword>
<keyword id="KW-0479">Metal-binding</keyword>
<keyword id="KW-0786">Thiamine pyrophosphate</keyword>
<keyword id="KW-0808">Transferase</keyword>
<dbReference type="EC" id="2.2.1.9" evidence="1"/>
<dbReference type="EMBL" id="CP000644">
    <property type="protein sequence ID" value="ABO91698.1"/>
    <property type="molecule type" value="Genomic_DNA"/>
</dbReference>
<dbReference type="RefSeq" id="WP_005316003.1">
    <property type="nucleotide sequence ID" value="NC_009348.1"/>
</dbReference>
<dbReference type="SMR" id="A4SS26"/>
<dbReference type="STRING" id="29491.GCA_000820065_04270"/>
<dbReference type="KEGG" id="asa:ASA_3737"/>
<dbReference type="PATRIC" id="fig|382245.13.peg.3710"/>
<dbReference type="eggNOG" id="COG1165">
    <property type="taxonomic scope" value="Bacteria"/>
</dbReference>
<dbReference type="HOGENOM" id="CLU_006051_3_0_6"/>
<dbReference type="UniPathway" id="UPA00079"/>
<dbReference type="UniPathway" id="UPA01057">
    <property type="reaction ID" value="UER00164"/>
</dbReference>
<dbReference type="Proteomes" id="UP000000225">
    <property type="component" value="Chromosome"/>
</dbReference>
<dbReference type="GO" id="GO:0070204">
    <property type="term" value="F:2-succinyl-5-enolpyruvyl-6-hydroxy-3-cyclohexene-1-carboxylic-acid synthase activity"/>
    <property type="evidence" value="ECO:0007669"/>
    <property type="project" value="UniProtKB-UniRule"/>
</dbReference>
<dbReference type="GO" id="GO:0000287">
    <property type="term" value="F:magnesium ion binding"/>
    <property type="evidence" value="ECO:0007669"/>
    <property type="project" value="UniProtKB-UniRule"/>
</dbReference>
<dbReference type="GO" id="GO:0030145">
    <property type="term" value="F:manganese ion binding"/>
    <property type="evidence" value="ECO:0007669"/>
    <property type="project" value="UniProtKB-UniRule"/>
</dbReference>
<dbReference type="GO" id="GO:0030976">
    <property type="term" value="F:thiamine pyrophosphate binding"/>
    <property type="evidence" value="ECO:0007669"/>
    <property type="project" value="UniProtKB-UniRule"/>
</dbReference>
<dbReference type="GO" id="GO:0009234">
    <property type="term" value="P:menaquinone biosynthetic process"/>
    <property type="evidence" value="ECO:0007669"/>
    <property type="project" value="UniProtKB-UniRule"/>
</dbReference>
<dbReference type="CDD" id="cd07037">
    <property type="entry name" value="TPP_PYR_MenD"/>
    <property type="match status" value="1"/>
</dbReference>
<dbReference type="CDD" id="cd02009">
    <property type="entry name" value="TPP_SHCHC_synthase"/>
    <property type="match status" value="1"/>
</dbReference>
<dbReference type="Gene3D" id="3.40.50.970">
    <property type="match status" value="2"/>
</dbReference>
<dbReference type="Gene3D" id="3.40.50.1220">
    <property type="entry name" value="TPP-binding domain"/>
    <property type="match status" value="1"/>
</dbReference>
<dbReference type="HAMAP" id="MF_01659">
    <property type="entry name" value="MenD"/>
    <property type="match status" value="1"/>
</dbReference>
<dbReference type="InterPro" id="IPR029035">
    <property type="entry name" value="DHS-like_NAD/FAD-binding_dom"/>
</dbReference>
<dbReference type="InterPro" id="IPR004433">
    <property type="entry name" value="MenaQ_synth_MenD"/>
</dbReference>
<dbReference type="InterPro" id="IPR032264">
    <property type="entry name" value="MenD_middle"/>
</dbReference>
<dbReference type="InterPro" id="IPR029061">
    <property type="entry name" value="THDP-binding"/>
</dbReference>
<dbReference type="InterPro" id="IPR012001">
    <property type="entry name" value="Thiamin_PyroP_enz_TPP-bd_dom"/>
</dbReference>
<dbReference type="InterPro" id="IPR011766">
    <property type="entry name" value="TPP_enzyme_TPP-bd"/>
</dbReference>
<dbReference type="NCBIfam" id="TIGR00173">
    <property type="entry name" value="menD"/>
    <property type="match status" value="1"/>
</dbReference>
<dbReference type="PANTHER" id="PTHR42916">
    <property type="entry name" value="2-SUCCINYL-5-ENOLPYRUVYL-6-HYDROXY-3-CYCLOHEXENE-1-CARBOXYLATE SYNTHASE"/>
    <property type="match status" value="1"/>
</dbReference>
<dbReference type="PANTHER" id="PTHR42916:SF1">
    <property type="entry name" value="PROTEIN PHYLLO, CHLOROPLASTIC"/>
    <property type="match status" value="1"/>
</dbReference>
<dbReference type="Pfam" id="PF02775">
    <property type="entry name" value="TPP_enzyme_C"/>
    <property type="match status" value="1"/>
</dbReference>
<dbReference type="Pfam" id="PF16582">
    <property type="entry name" value="TPP_enzyme_M_2"/>
    <property type="match status" value="1"/>
</dbReference>
<dbReference type="Pfam" id="PF02776">
    <property type="entry name" value="TPP_enzyme_N"/>
    <property type="match status" value="1"/>
</dbReference>
<dbReference type="PIRSF" id="PIRSF004983">
    <property type="entry name" value="MenD"/>
    <property type="match status" value="1"/>
</dbReference>
<dbReference type="SUPFAM" id="SSF52467">
    <property type="entry name" value="DHS-like NAD/FAD-binding domain"/>
    <property type="match status" value="1"/>
</dbReference>
<dbReference type="SUPFAM" id="SSF52518">
    <property type="entry name" value="Thiamin diphosphate-binding fold (THDP-binding)"/>
    <property type="match status" value="2"/>
</dbReference>
<evidence type="ECO:0000255" key="1">
    <source>
        <dbReference type="HAMAP-Rule" id="MF_01659"/>
    </source>
</evidence>